<sequence length="268" mass="29307">MNAITNFLRKKNSSCALIPFITAGYPNIDICIKALKVLDREGADLIELGIPYSDALADGPIIQEASQAALKQGIYIEQVLSILTKVIPDLHAPIIIFTYYNPVLVRGVDKFICEISQAGAKGLIIPDLPLEEVDYILELCNLYSIELILFVAPTSSQSRIQLIASKSPGCIYLVSSCGVTGLRDNFDVKIQHLANNIKSTTNKLIMLGFGINNPDQISQIINWNIDGIVVGSAIITHIVGELPQDMLNSLAHFCKKLKYSIHTASNVK</sequence>
<proteinExistence type="inferred from homology"/>
<evidence type="ECO:0000255" key="1">
    <source>
        <dbReference type="HAMAP-Rule" id="MF_00131"/>
    </source>
</evidence>
<protein>
    <recommendedName>
        <fullName evidence="1">Tryptophan synthase alpha chain</fullName>
        <ecNumber evidence="1">4.2.1.20</ecNumber>
    </recommendedName>
</protein>
<reference key="1">
    <citation type="journal article" date="2004" name="J. Mol. Evol.">
        <title>Comparative analysis of the complete plastid genome sequence of the red alga Gracilaria tenuistipitata var. liui provides insights into the evolution of rhodoplasts and their relationship to other plastids.</title>
        <authorList>
            <person name="Hagopian J.C."/>
            <person name="Reis M."/>
            <person name="Kitajima J.P."/>
            <person name="Bhattacharya D."/>
            <person name="de Oliveira M.C."/>
        </authorList>
    </citation>
    <scope>NUCLEOTIDE SEQUENCE [LARGE SCALE GENOMIC DNA]</scope>
</reference>
<gene>
    <name evidence="1" type="primary">trpA</name>
    <name type="ordered locus">Grc000192</name>
</gene>
<name>TRPA_GRATL</name>
<dbReference type="EC" id="4.2.1.20" evidence="1"/>
<dbReference type="EMBL" id="AY673996">
    <property type="protein sequence ID" value="AAT79773.1"/>
    <property type="molecule type" value="Genomic_DNA"/>
</dbReference>
<dbReference type="RefSeq" id="YP_063698.1">
    <property type="nucleotide sequence ID" value="NC_006137.1"/>
</dbReference>
<dbReference type="SMR" id="Q6B8L2"/>
<dbReference type="GeneID" id="2944144"/>
<dbReference type="UniPathway" id="UPA00035">
    <property type="reaction ID" value="UER00044"/>
</dbReference>
<dbReference type="GO" id="GO:0009507">
    <property type="term" value="C:chloroplast"/>
    <property type="evidence" value="ECO:0007669"/>
    <property type="project" value="UniProtKB-SubCell"/>
</dbReference>
<dbReference type="GO" id="GO:0005829">
    <property type="term" value="C:cytosol"/>
    <property type="evidence" value="ECO:0007669"/>
    <property type="project" value="TreeGrafter"/>
</dbReference>
<dbReference type="GO" id="GO:0004834">
    <property type="term" value="F:tryptophan synthase activity"/>
    <property type="evidence" value="ECO:0007669"/>
    <property type="project" value="UniProtKB-UniRule"/>
</dbReference>
<dbReference type="CDD" id="cd04724">
    <property type="entry name" value="Tryptophan_synthase_alpha"/>
    <property type="match status" value="1"/>
</dbReference>
<dbReference type="FunFam" id="3.20.20.70:FF:000037">
    <property type="entry name" value="Tryptophan synthase alpha chain"/>
    <property type="match status" value="1"/>
</dbReference>
<dbReference type="Gene3D" id="3.20.20.70">
    <property type="entry name" value="Aldolase class I"/>
    <property type="match status" value="1"/>
</dbReference>
<dbReference type="HAMAP" id="MF_00131">
    <property type="entry name" value="Trp_synth_alpha"/>
    <property type="match status" value="1"/>
</dbReference>
<dbReference type="InterPro" id="IPR013785">
    <property type="entry name" value="Aldolase_TIM"/>
</dbReference>
<dbReference type="InterPro" id="IPR011060">
    <property type="entry name" value="RibuloseP-bd_barrel"/>
</dbReference>
<dbReference type="InterPro" id="IPR018204">
    <property type="entry name" value="Trp_synthase_alpha_AS"/>
</dbReference>
<dbReference type="InterPro" id="IPR002028">
    <property type="entry name" value="Trp_synthase_suA"/>
</dbReference>
<dbReference type="NCBIfam" id="TIGR00262">
    <property type="entry name" value="trpA"/>
    <property type="match status" value="1"/>
</dbReference>
<dbReference type="PANTHER" id="PTHR43406:SF1">
    <property type="entry name" value="TRYPTOPHAN SYNTHASE ALPHA CHAIN, CHLOROPLASTIC"/>
    <property type="match status" value="1"/>
</dbReference>
<dbReference type="PANTHER" id="PTHR43406">
    <property type="entry name" value="TRYPTOPHAN SYNTHASE, ALPHA CHAIN"/>
    <property type="match status" value="1"/>
</dbReference>
<dbReference type="Pfam" id="PF00290">
    <property type="entry name" value="Trp_syntA"/>
    <property type="match status" value="1"/>
</dbReference>
<dbReference type="SUPFAM" id="SSF51366">
    <property type="entry name" value="Ribulose-phoshate binding barrel"/>
    <property type="match status" value="1"/>
</dbReference>
<dbReference type="PROSITE" id="PS00167">
    <property type="entry name" value="TRP_SYNTHASE_ALPHA"/>
    <property type="match status" value="1"/>
</dbReference>
<keyword id="KW-0028">Amino-acid biosynthesis</keyword>
<keyword id="KW-0057">Aromatic amino acid biosynthesis</keyword>
<keyword id="KW-0150">Chloroplast</keyword>
<keyword id="KW-0456">Lyase</keyword>
<keyword id="KW-0934">Plastid</keyword>
<keyword id="KW-0822">Tryptophan biosynthesis</keyword>
<accession>Q6B8L2</accession>
<comment type="function">
    <text evidence="1">The alpha subunit is responsible for the aldol cleavage of indoleglycerol phosphate to indole and glyceraldehyde 3-phosphate.</text>
</comment>
<comment type="catalytic activity">
    <reaction evidence="1">
        <text>(1S,2R)-1-C-(indol-3-yl)glycerol 3-phosphate + L-serine = D-glyceraldehyde 3-phosphate + L-tryptophan + H2O</text>
        <dbReference type="Rhea" id="RHEA:10532"/>
        <dbReference type="ChEBI" id="CHEBI:15377"/>
        <dbReference type="ChEBI" id="CHEBI:33384"/>
        <dbReference type="ChEBI" id="CHEBI:57912"/>
        <dbReference type="ChEBI" id="CHEBI:58866"/>
        <dbReference type="ChEBI" id="CHEBI:59776"/>
        <dbReference type="EC" id="4.2.1.20"/>
    </reaction>
</comment>
<comment type="pathway">
    <text evidence="1">Amino-acid biosynthesis; L-tryptophan biosynthesis; L-tryptophan from chorismate: step 5/5.</text>
</comment>
<comment type="subunit">
    <text evidence="1">Tetramer of two alpha and two beta chains.</text>
</comment>
<comment type="subcellular location">
    <subcellularLocation>
        <location>Plastid</location>
        <location>Chloroplast</location>
    </subcellularLocation>
</comment>
<comment type="similarity">
    <text evidence="1">Belongs to the TrpA family.</text>
</comment>
<geneLocation type="chloroplast"/>
<organism>
    <name type="scientific">Gracilaria tenuistipitata var. liui</name>
    <name type="common">Red alga</name>
    <dbReference type="NCBI Taxonomy" id="285951"/>
    <lineage>
        <taxon>Eukaryota</taxon>
        <taxon>Rhodophyta</taxon>
        <taxon>Florideophyceae</taxon>
        <taxon>Rhodymeniophycidae</taxon>
        <taxon>Gracilariales</taxon>
        <taxon>Gracilariaceae</taxon>
        <taxon>Gracilaria</taxon>
        <taxon>Gracilaria tenuistipitata</taxon>
    </lineage>
</organism>
<feature type="chain" id="PRO_0000098906" description="Tryptophan synthase alpha chain">
    <location>
        <begin position="1"/>
        <end position="268"/>
    </location>
</feature>
<feature type="active site" description="Proton acceptor" evidence="1">
    <location>
        <position position="47"/>
    </location>
</feature>
<feature type="active site" description="Proton acceptor" evidence="1">
    <location>
        <position position="58"/>
    </location>
</feature>